<name>PRB1_ARATH</name>
<gene>
    <name evidence="7" type="primary">PRB1</name>
    <name evidence="8" type="synonym">PR1</name>
    <name evidence="10" type="ordered locus">At2g14580</name>
    <name evidence="12" type="ORF">T13P21.4</name>
    <name evidence="11" type="ORF">T6B13</name>
</gene>
<protein>
    <recommendedName>
        <fullName evidence="7">Pathogenesis-related protein 1</fullName>
        <shortName evidence="7">AtPRB1</shortName>
    </recommendedName>
</protein>
<proteinExistence type="evidence at transcript level"/>
<organism evidence="13">
    <name type="scientific">Arabidopsis thaliana</name>
    <name type="common">Mouse-ear cress</name>
    <dbReference type="NCBI Taxonomy" id="3702"/>
    <lineage>
        <taxon>Eukaryota</taxon>
        <taxon>Viridiplantae</taxon>
        <taxon>Streptophyta</taxon>
        <taxon>Embryophyta</taxon>
        <taxon>Tracheophyta</taxon>
        <taxon>Spermatophyta</taxon>
        <taxon>Magnoliopsida</taxon>
        <taxon>eudicotyledons</taxon>
        <taxon>Gunneridae</taxon>
        <taxon>Pentapetalae</taxon>
        <taxon>rosids</taxon>
        <taxon>malvids</taxon>
        <taxon>Brassicales</taxon>
        <taxon>Brassicaceae</taxon>
        <taxon>Camelineae</taxon>
        <taxon>Arabidopsis</taxon>
    </lineage>
</organism>
<reference key="1">
    <citation type="journal article" date="1999" name="Nature">
        <title>Sequence and analysis of chromosome 2 of the plant Arabidopsis thaliana.</title>
        <authorList>
            <person name="Lin X."/>
            <person name="Kaul S."/>
            <person name="Rounsley S.D."/>
            <person name="Shea T.P."/>
            <person name="Benito M.-I."/>
            <person name="Town C.D."/>
            <person name="Fujii C.Y."/>
            <person name="Mason T.M."/>
            <person name="Bowman C.L."/>
            <person name="Barnstead M.E."/>
            <person name="Feldblyum T.V."/>
            <person name="Buell C.R."/>
            <person name="Ketchum K.A."/>
            <person name="Lee J.J."/>
            <person name="Ronning C.M."/>
            <person name="Koo H.L."/>
            <person name="Moffat K.S."/>
            <person name="Cronin L.A."/>
            <person name="Shen M."/>
            <person name="Pai G."/>
            <person name="Van Aken S."/>
            <person name="Umayam L."/>
            <person name="Tallon L.J."/>
            <person name="Gill J.E."/>
            <person name="Adams M.D."/>
            <person name="Carrera A.J."/>
            <person name="Creasy T.H."/>
            <person name="Goodman H.M."/>
            <person name="Somerville C.R."/>
            <person name="Copenhaver G.P."/>
            <person name="Preuss D."/>
            <person name="Nierman W.C."/>
            <person name="White O."/>
            <person name="Eisen J.A."/>
            <person name="Salzberg S.L."/>
            <person name="Fraser C.M."/>
            <person name="Venter J.C."/>
        </authorList>
    </citation>
    <scope>NUCLEOTIDE SEQUENCE [LARGE SCALE GENOMIC DNA]</scope>
    <source>
        <strain>cv. Columbia</strain>
    </source>
</reference>
<reference key="2">
    <citation type="journal article" date="2017" name="Plant J.">
        <title>Araport11: a complete reannotation of the Arabidopsis thaliana reference genome.</title>
        <authorList>
            <person name="Cheng C.Y."/>
            <person name="Krishnakumar V."/>
            <person name="Chan A.P."/>
            <person name="Thibaud-Nissen F."/>
            <person name="Schobel S."/>
            <person name="Town C.D."/>
        </authorList>
    </citation>
    <scope>GENOME REANNOTATION</scope>
    <source>
        <strain>cv. Columbia</strain>
    </source>
</reference>
<reference key="3">
    <citation type="journal article" date="2001" name="Plant Mol. Biol.">
        <title>The promoter of a basic PR1-like gene, AtPRB1, from Arabidopsis establishes an organ-specific expression pattern and responsiveness to ethylene and methyl jasmonate.</title>
        <authorList>
            <person name="Santamaria M."/>
            <person name="Thomson C.J."/>
            <person name="Read N.D."/>
            <person name="Loake G.J."/>
        </authorList>
    </citation>
    <scope>TISSUE SPECIFICITY</scope>
    <scope>INDUCTION BY JASMONIC ACID; ETHYLENE AND SALICYLIC ACID</scope>
    <source>
        <strain>cv. Columbia</strain>
        <strain>cv. Wassilewskija</strain>
    </source>
</reference>
<reference key="4">
    <citation type="journal article" date="2003" name="Genome Res.">
        <title>Gene expression analyses of Arabidopsis chromosome 2 using a genomic DNA amplicon microarray.</title>
        <authorList>
            <person name="Kim H."/>
            <person name="Snesrud E.C."/>
            <person name="Haas B."/>
            <person name="Cheung F."/>
            <person name="Town C.D."/>
            <person name="Quackenbush J."/>
        </authorList>
    </citation>
    <scope>INDUCTION BY PSEUDOMONAS SYRINGAE</scope>
</reference>
<reference key="5">
    <citation type="journal article" date="2003" name="Plant Physiol.">
        <title>Modulation of CYP79 genes and glucosinolate profiles in Arabidopsis by defense signaling pathways.</title>
        <authorList>
            <person name="Mikkelsen M.D."/>
            <person name="Petersen B.L."/>
            <person name="Glawischnig E."/>
            <person name="Jensen A.B."/>
            <person name="Andreasson E."/>
            <person name="Halkier B.A."/>
        </authorList>
    </citation>
    <scope>INDUCTION BY WOUNDING; JASMONIC ACID; ETHYLENE AND SALICYLIC ACID</scope>
</reference>
<reference key="6">
    <citation type="journal article" date="2008" name="BMC Genomics">
        <title>Comparative transcriptome analysis of Arabidopsis thaliana infested by diamond back moth (Plutella xylostella) larvae reveals signatures of stress response, secondary metabolism, and signalling.</title>
        <authorList>
            <person name="Ehlting J."/>
            <person name="Chowrira S.G."/>
            <person name="Mattheus N."/>
            <person name="Aeschliman D.S."/>
            <person name="Arimura G."/>
            <person name="Bohlmann J."/>
        </authorList>
    </citation>
    <scope>INDUCTION BY PLUTELLA XYLOSTELLA; WOUNDING; ETHYLENE; SALICYLIC ACID AND JASMONIC ACID</scope>
</reference>
<comment type="function">
    <text evidence="1">Probably involved in the defense reaction of plants against pathogens.</text>
</comment>
<comment type="tissue specificity">
    <text evidence="3">Expressed in flowers, stems and roots but not in leaves.</text>
</comment>
<comment type="induction">
    <text evidence="3 4 5 6">Accumulates in root tissue in response to ethylene (ET, ACC) and methyl jasmonate (MeJA) (PubMed:11725949, PubMed:12529537, PubMed:18400103). Stimulated by the salicylic acid analog 2,6-dichloro-isonicotinic acid (INA) (PubMed:12529537, PubMed:18400103). Expressed after wounding (PubMed:12529537, PubMed:18400103). Repressed in response to salicylic acid treatment (PubMed:11725949). Strongly induced in response to the incompatible bacterial pathogen Pseudomonas syringae pv. tomato DC3000 (avrRpt2) but only weakly by the compatible strain P.syringae DC3000 (PubMed:12618363). First down-regulated early during diamond back moth (Plutella xylostella) larvae (DBM) feeding before being up-regulated after 24 hours (PubMed:18400103).</text>
</comment>
<comment type="similarity">
    <text evidence="9">Belongs to the CRISP family.</text>
</comment>
<feature type="signal peptide" evidence="2">
    <location>
        <begin position="1"/>
        <end position="26"/>
    </location>
</feature>
<feature type="chain" id="PRO_0000431741" description="Pathogenesis-related protein 1" evidence="2">
    <location>
        <begin position="27"/>
        <end position="161"/>
    </location>
</feature>
<feature type="domain" description="SCP" evidence="2">
    <location>
        <begin position="34"/>
        <end position="149"/>
    </location>
</feature>
<feature type="disulfide bond" evidence="1">
    <location>
        <begin position="70"/>
        <end position="138"/>
    </location>
</feature>
<feature type="disulfide bond" evidence="1">
    <location>
        <begin position="113"/>
        <end position="117"/>
    </location>
</feature>
<feature type="disulfide bond" evidence="1">
    <location>
        <begin position="133"/>
        <end position="147"/>
    </location>
</feature>
<keyword id="KW-1015">Disulfide bond</keyword>
<keyword id="KW-0611">Plant defense</keyword>
<keyword id="KW-1185">Reference proteome</keyword>
<keyword id="KW-0732">Signal</keyword>
<sequence>MKVTSYSRILIILAALVGALVVPLKAQDSQQDYVNAHNQARSQIGVGPMQWDEGLAAYARNYANQLKGDCRLVHSRGPYGENLAKSGGDLSGVAAVNLWVNEKANYNYDTNTCNGVCGHYTQVVWRNSVRLGCAKVRCNNGGTIISCNYDPPGNYANQKPY</sequence>
<accession>Q9ZNS4</accession>
<evidence type="ECO:0000250" key="1">
    <source>
        <dbReference type="UniProtKB" id="P04284"/>
    </source>
</evidence>
<evidence type="ECO:0000255" key="2"/>
<evidence type="ECO:0000269" key="3">
    <source>
    </source>
</evidence>
<evidence type="ECO:0000269" key="4">
    <source>
    </source>
</evidence>
<evidence type="ECO:0000269" key="5">
    <source>
    </source>
</evidence>
<evidence type="ECO:0000269" key="6">
    <source>
    </source>
</evidence>
<evidence type="ECO:0000303" key="7">
    <source>
    </source>
</evidence>
<evidence type="ECO:0000303" key="8">
    <source>
    </source>
</evidence>
<evidence type="ECO:0000305" key="9"/>
<evidence type="ECO:0000312" key="10">
    <source>
        <dbReference type="Araport" id="AT2G14580"/>
    </source>
</evidence>
<evidence type="ECO:0000312" key="11">
    <source>
        <dbReference type="EMBL" id="AAC69384.1"/>
    </source>
</evidence>
<evidence type="ECO:0000312" key="12">
    <source>
        <dbReference type="EMBL" id="AAM15107.1"/>
    </source>
</evidence>
<evidence type="ECO:0000312" key="13">
    <source>
        <dbReference type="Proteomes" id="UP000006548"/>
    </source>
</evidence>
<dbReference type="EMBL" id="AC005398">
    <property type="protein sequence ID" value="AAC69384.1"/>
    <property type="molecule type" value="Genomic_DNA"/>
</dbReference>
<dbReference type="EMBL" id="AC006067">
    <property type="protein sequence ID" value="AAM15107.1"/>
    <property type="molecule type" value="Genomic_DNA"/>
</dbReference>
<dbReference type="EMBL" id="CP002685">
    <property type="protein sequence ID" value="AEC06313.1"/>
    <property type="molecule type" value="Genomic_DNA"/>
</dbReference>
<dbReference type="PIR" id="H84518">
    <property type="entry name" value="H84518"/>
</dbReference>
<dbReference type="RefSeq" id="NP_179064.1">
    <property type="nucleotide sequence ID" value="NM_127021.3"/>
</dbReference>
<dbReference type="SMR" id="Q9ZNS4"/>
<dbReference type="FunCoup" id="Q9ZNS4">
    <property type="interactions" value="646"/>
</dbReference>
<dbReference type="STRING" id="3702.Q9ZNS4"/>
<dbReference type="PaxDb" id="3702-AT2G14580.1"/>
<dbReference type="ProteomicsDB" id="226409"/>
<dbReference type="EnsemblPlants" id="AT2G14580.1">
    <property type="protein sequence ID" value="AT2G14580.1"/>
    <property type="gene ID" value="AT2G14580"/>
</dbReference>
<dbReference type="GeneID" id="815945"/>
<dbReference type="Gramene" id="AT2G14580.1">
    <property type="protein sequence ID" value="AT2G14580.1"/>
    <property type="gene ID" value="AT2G14580"/>
</dbReference>
<dbReference type="KEGG" id="ath:AT2G14580"/>
<dbReference type="Araport" id="AT2G14580"/>
<dbReference type="TAIR" id="AT2G14580">
    <property type="gene designation" value="PRB1"/>
</dbReference>
<dbReference type="eggNOG" id="KOG3017">
    <property type="taxonomic scope" value="Eukaryota"/>
</dbReference>
<dbReference type="HOGENOM" id="CLU_035730_8_1_1"/>
<dbReference type="InParanoid" id="Q9ZNS4"/>
<dbReference type="OMA" id="RTTHYYK"/>
<dbReference type="OrthoDB" id="337038at2759"/>
<dbReference type="PhylomeDB" id="Q9ZNS4"/>
<dbReference type="PRO" id="PR:Q9ZNS4"/>
<dbReference type="Proteomes" id="UP000006548">
    <property type="component" value="Chromosome 2"/>
</dbReference>
<dbReference type="ExpressionAtlas" id="Q9ZNS4">
    <property type="expression patterns" value="baseline and differential"/>
</dbReference>
<dbReference type="GO" id="GO:0005576">
    <property type="term" value="C:extracellular region"/>
    <property type="evidence" value="ECO:0007669"/>
    <property type="project" value="InterPro"/>
</dbReference>
<dbReference type="GO" id="GO:0098542">
    <property type="term" value="P:defense response to other organism"/>
    <property type="evidence" value="ECO:0000270"/>
    <property type="project" value="UniProtKB"/>
</dbReference>
<dbReference type="GO" id="GO:0009617">
    <property type="term" value="P:response to bacterium"/>
    <property type="evidence" value="ECO:0000270"/>
    <property type="project" value="UniProtKB"/>
</dbReference>
<dbReference type="GO" id="GO:0009723">
    <property type="term" value="P:response to ethylene"/>
    <property type="evidence" value="ECO:0000270"/>
    <property type="project" value="UniProtKB"/>
</dbReference>
<dbReference type="GO" id="GO:0080027">
    <property type="term" value="P:response to herbivore"/>
    <property type="evidence" value="ECO:0000270"/>
    <property type="project" value="UniProtKB"/>
</dbReference>
<dbReference type="GO" id="GO:0009753">
    <property type="term" value="P:response to jasmonic acid"/>
    <property type="evidence" value="ECO:0000270"/>
    <property type="project" value="UniProtKB"/>
</dbReference>
<dbReference type="GO" id="GO:0009751">
    <property type="term" value="P:response to salicylic acid"/>
    <property type="evidence" value="ECO:0000270"/>
    <property type="project" value="UniProtKB"/>
</dbReference>
<dbReference type="GO" id="GO:0009611">
    <property type="term" value="P:response to wounding"/>
    <property type="evidence" value="ECO:0000270"/>
    <property type="project" value="UniProtKB"/>
</dbReference>
<dbReference type="CDD" id="cd05381">
    <property type="entry name" value="CAP_PR-1"/>
    <property type="match status" value="1"/>
</dbReference>
<dbReference type="FunFam" id="3.40.33.10:FF:000006">
    <property type="entry name" value="Putative pathogenesis-related protein 1"/>
    <property type="match status" value="1"/>
</dbReference>
<dbReference type="Gene3D" id="3.40.33.10">
    <property type="entry name" value="CAP"/>
    <property type="match status" value="1"/>
</dbReference>
<dbReference type="InterPro" id="IPR018244">
    <property type="entry name" value="Allrgn_V5/Tpx1_CS"/>
</dbReference>
<dbReference type="InterPro" id="IPR014044">
    <property type="entry name" value="CAP_dom"/>
</dbReference>
<dbReference type="InterPro" id="IPR035940">
    <property type="entry name" value="CAP_sf"/>
</dbReference>
<dbReference type="InterPro" id="IPR001283">
    <property type="entry name" value="CRISP-related"/>
</dbReference>
<dbReference type="PANTHER" id="PTHR10334">
    <property type="entry name" value="CYSTEINE-RICH SECRETORY PROTEIN-RELATED"/>
    <property type="match status" value="1"/>
</dbReference>
<dbReference type="Pfam" id="PF00188">
    <property type="entry name" value="CAP"/>
    <property type="match status" value="1"/>
</dbReference>
<dbReference type="PRINTS" id="PR00837">
    <property type="entry name" value="V5TPXLIKE"/>
</dbReference>
<dbReference type="SMART" id="SM00198">
    <property type="entry name" value="SCP"/>
    <property type="match status" value="1"/>
</dbReference>
<dbReference type="SUPFAM" id="SSF55797">
    <property type="entry name" value="PR-1-like"/>
    <property type="match status" value="1"/>
</dbReference>
<dbReference type="PROSITE" id="PS01009">
    <property type="entry name" value="CRISP_1"/>
    <property type="match status" value="1"/>
</dbReference>
<dbReference type="PROSITE" id="PS01010">
    <property type="entry name" value="CRISP_2"/>
    <property type="match status" value="1"/>
</dbReference>